<gene>
    <name evidence="1" type="primary">rpl23</name>
    <name type="ordered locus">APE_0228a.1</name>
    <name type="ORF">APES004</name>
</gene>
<evidence type="ECO:0000255" key="1">
    <source>
        <dbReference type="HAMAP-Rule" id="MF_01369"/>
    </source>
</evidence>
<evidence type="ECO:0000305" key="2"/>
<name>RL23_AERPE</name>
<comment type="function">
    <text evidence="1">Binds to 23S rRNA. One of the proteins that surrounds the polypeptide exit tunnel on the outside of the ribosome.</text>
</comment>
<comment type="subunit">
    <text evidence="1">Part of the 50S ribosomal subunit. Contacts protein L29.</text>
</comment>
<comment type="similarity">
    <text evidence="1">Belongs to the universal ribosomal protein uL23 family.</text>
</comment>
<feature type="chain" id="PRO_0000129433" description="Large ribosomal subunit protein uL23">
    <location>
        <begin position="1"/>
        <end position="86"/>
    </location>
</feature>
<organism>
    <name type="scientific">Aeropyrum pernix (strain ATCC 700893 / DSM 11879 / JCM 9820 / NBRC 100138 / K1)</name>
    <dbReference type="NCBI Taxonomy" id="272557"/>
    <lineage>
        <taxon>Archaea</taxon>
        <taxon>Thermoproteota</taxon>
        <taxon>Thermoprotei</taxon>
        <taxon>Desulfurococcales</taxon>
        <taxon>Desulfurococcaceae</taxon>
        <taxon>Aeropyrum</taxon>
    </lineage>
</organism>
<sequence length="86" mass="9913">MKPEEVIIRVYVTEKTTRMLEEENTLTFIVRREATKNDVKRAVEQLFGVKVEKVRTLITPRGYKKAYVKLAPEYKALDVATKLGAV</sequence>
<keyword id="KW-1185">Reference proteome</keyword>
<keyword id="KW-0687">Ribonucleoprotein</keyword>
<keyword id="KW-0689">Ribosomal protein</keyword>
<keyword id="KW-0694">RNA-binding</keyword>
<keyword id="KW-0699">rRNA-binding</keyword>
<protein>
    <recommendedName>
        <fullName evidence="1">Large ribosomal subunit protein uL23</fullName>
    </recommendedName>
    <alternativeName>
        <fullName evidence="2">50S ribosomal protein L23</fullName>
    </alternativeName>
</protein>
<dbReference type="EMBL" id="BA000002">
    <property type="protein sequence ID" value="BAA79141.2"/>
    <property type="molecule type" value="Genomic_DNA"/>
</dbReference>
<dbReference type="PIR" id="C72780">
    <property type="entry name" value="C72780"/>
</dbReference>
<dbReference type="RefSeq" id="WP_010865584.1">
    <property type="nucleotide sequence ID" value="NC_000854.2"/>
</dbReference>
<dbReference type="SMR" id="Q9YFM0"/>
<dbReference type="STRING" id="272557.APE_0228a.1"/>
<dbReference type="EnsemblBacteria" id="BAA79141">
    <property type="protein sequence ID" value="BAA79141"/>
    <property type="gene ID" value="APE_0228a.1"/>
</dbReference>
<dbReference type="GeneID" id="1445746"/>
<dbReference type="KEGG" id="ape:APE_0228a.1"/>
<dbReference type="PATRIC" id="fig|272557.25.peg.163"/>
<dbReference type="eggNOG" id="arCOG04072">
    <property type="taxonomic scope" value="Archaea"/>
</dbReference>
<dbReference type="Proteomes" id="UP000002518">
    <property type="component" value="Chromosome"/>
</dbReference>
<dbReference type="GO" id="GO:1990904">
    <property type="term" value="C:ribonucleoprotein complex"/>
    <property type="evidence" value="ECO:0007669"/>
    <property type="project" value="UniProtKB-KW"/>
</dbReference>
<dbReference type="GO" id="GO:0005840">
    <property type="term" value="C:ribosome"/>
    <property type="evidence" value="ECO:0007669"/>
    <property type="project" value="UniProtKB-KW"/>
</dbReference>
<dbReference type="GO" id="GO:0019843">
    <property type="term" value="F:rRNA binding"/>
    <property type="evidence" value="ECO:0007669"/>
    <property type="project" value="UniProtKB-UniRule"/>
</dbReference>
<dbReference type="GO" id="GO:0003735">
    <property type="term" value="F:structural constituent of ribosome"/>
    <property type="evidence" value="ECO:0007669"/>
    <property type="project" value="InterPro"/>
</dbReference>
<dbReference type="GO" id="GO:0006412">
    <property type="term" value="P:translation"/>
    <property type="evidence" value="ECO:0007669"/>
    <property type="project" value="UniProtKB-UniRule"/>
</dbReference>
<dbReference type="FunFam" id="3.30.70.330:FF:000532">
    <property type="entry name" value="50S ribosomal protein L23"/>
    <property type="match status" value="1"/>
</dbReference>
<dbReference type="Gene3D" id="3.30.70.330">
    <property type="match status" value="1"/>
</dbReference>
<dbReference type="HAMAP" id="MF_01369_A">
    <property type="entry name" value="Ribosomal_uL23_A"/>
    <property type="match status" value="1"/>
</dbReference>
<dbReference type="HAMAP" id="MF_01369_B">
    <property type="entry name" value="Ribosomal_uL23_B"/>
    <property type="match status" value="1"/>
</dbReference>
<dbReference type="InterPro" id="IPR012677">
    <property type="entry name" value="Nucleotide-bd_a/b_plait_sf"/>
</dbReference>
<dbReference type="InterPro" id="IPR019985">
    <property type="entry name" value="Ribosomal_uL23"/>
</dbReference>
<dbReference type="InterPro" id="IPR013025">
    <property type="entry name" value="Ribosomal_uL23-like"/>
</dbReference>
<dbReference type="InterPro" id="IPR012678">
    <property type="entry name" value="Ribosomal_uL23/eL15/eS24_sf"/>
</dbReference>
<dbReference type="InterPro" id="IPR001014">
    <property type="entry name" value="Ribosomal_uL23_CS"/>
</dbReference>
<dbReference type="NCBIfam" id="NF011118">
    <property type="entry name" value="PRK14548.1"/>
    <property type="match status" value="1"/>
</dbReference>
<dbReference type="NCBIfam" id="TIGR03636">
    <property type="entry name" value="uL23_arch"/>
    <property type="match status" value="1"/>
</dbReference>
<dbReference type="PANTHER" id="PTHR11620">
    <property type="entry name" value="60S RIBOSOMAL PROTEIN L23A"/>
    <property type="match status" value="1"/>
</dbReference>
<dbReference type="Pfam" id="PF00276">
    <property type="entry name" value="Ribosomal_L23"/>
    <property type="match status" value="1"/>
</dbReference>
<dbReference type="SUPFAM" id="SSF54189">
    <property type="entry name" value="Ribosomal proteins S24e, L23 and L15e"/>
    <property type="match status" value="1"/>
</dbReference>
<dbReference type="PROSITE" id="PS00050">
    <property type="entry name" value="RIBOSOMAL_L23"/>
    <property type="match status" value="1"/>
</dbReference>
<accession>Q9YFM0</accession>
<reference key="1">
    <citation type="journal article" date="1999" name="DNA Res.">
        <title>Complete genome sequence of an aerobic hyper-thermophilic crenarchaeon, Aeropyrum pernix K1.</title>
        <authorList>
            <person name="Kawarabayasi Y."/>
            <person name="Hino Y."/>
            <person name="Horikawa H."/>
            <person name="Yamazaki S."/>
            <person name="Haikawa Y."/>
            <person name="Jin-no K."/>
            <person name="Takahashi M."/>
            <person name="Sekine M."/>
            <person name="Baba S."/>
            <person name="Ankai A."/>
            <person name="Kosugi H."/>
            <person name="Hosoyama A."/>
            <person name="Fukui S."/>
            <person name="Nagai Y."/>
            <person name="Nishijima K."/>
            <person name="Nakazawa H."/>
            <person name="Takamiya M."/>
            <person name="Masuda S."/>
            <person name="Funahashi T."/>
            <person name="Tanaka T."/>
            <person name="Kudoh Y."/>
            <person name="Yamazaki J."/>
            <person name="Kushida N."/>
            <person name="Oguchi A."/>
            <person name="Aoki K."/>
            <person name="Kubota K."/>
            <person name="Nakamura Y."/>
            <person name="Nomura N."/>
            <person name="Sako Y."/>
            <person name="Kikuchi H."/>
        </authorList>
    </citation>
    <scope>NUCLEOTIDE SEQUENCE [LARGE SCALE GENOMIC DNA]</scope>
    <source>
        <strain>ATCC 700893 / DSM 11879 / JCM 9820 / NBRC 100138 / K1</strain>
    </source>
</reference>
<proteinExistence type="inferred from homology"/>